<evidence type="ECO:0000255" key="1">
    <source>
        <dbReference type="HAMAP-Rule" id="MF_01218"/>
    </source>
</evidence>
<gene>
    <name evidence="1" type="primary">upp</name>
    <name type="ordered locus">XCC2386</name>
</gene>
<protein>
    <recommendedName>
        <fullName evidence="1">Uracil phosphoribosyltransferase</fullName>
        <ecNumber evidence="1">2.4.2.9</ecNumber>
    </recommendedName>
    <alternativeName>
        <fullName evidence="1">UMP pyrophosphorylase</fullName>
    </alternativeName>
    <alternativeName>
        <fullName evidence="1">UPRTase</fullName>
    </alternativeName>
</protein>
<name>UPP_XANCP</name>
<comment type="function">
    <text evidence="1">Catalyzes the conversion of uracil and 5-phospho-alpha-D-ribose 1-diphosphate (PRPP) to UMP and diphosphate.</text>
</comment>
<comment type="catalytic activity">
    <reaction evidence="1">
        <text>UMP + diphosphate = 5-phospho-alpha-D-ribose 1-diphosphate + uracil</text>
        <dbReference type="Rhea" id="RHEA:13017"/>
        <dbReference type="ChEBI" id="CHEBI:17568"/>
        <dbReference type="ChEBI" id="CHEBI:33019"/>
        <dbReference type="ChEBI" id="CHEBI:57865"/>
        <dbReference type="ChEBI" id="CHEBI:58017"/>
        <dbReference type="EC" id="2.4.2.9"/>
    </reaction>
</comment>
<comment type="cofactor">
    <cofactor evidence="1">
        <name>Mg(2+)</name>
        <dbReference type="ChEBI" id="CHEBI:18420"/>
    </cofactor>
    <text evidence="1">Binds 1 Mg(2+) ion per subunit. The magnesium is bound as Mg-PRPP.</text>
</comment>
<comment type="activity regulation">
    <text evidence="1">Allosterically activated by GTP.</text>
</comment>
<comment type="pathway">
    <text evidence="1">Pyrimidine metabolism; UMP biosynthesis via salvage pathway; UMP from uracil: step 1/1.</text>
</comment>
<comment type="similarity">
    <text evidence="1">Belongs to the UPRTase family.</text>
</comment>
<organism>
    <name type="scientific">Xanthomonas campestris pv. campestris (strain ATCC 33913 / DSM 3586 / NCPPB 528 / LMG 568 / P 25)</name>
    <dbReference type="NCBI Taxonomy" id="190485"/>
    <lineage>
        <taxon>Bacteria</taxon>
        <taxon>Pseudomonadati</taxon>
        <taxon>Pseudomonadota</taxon>
        <taxon>Gammaproteobacteria</taxon>
        <taxon>Lysobacterales</taxon>
        <taxon>Lysobacteraceae</taxon>
        <taxon>Xanthomonas</taxon>
    </lineage>
</organism>
<feature type="chain" id="PRO_0000120914" description="Uracil phosphoribosyltransferase">
    <location>
        <begin position="1"/>
        <end position="210"/>
    </location>
</feature>
<feature type="binding site" evidence="1">
    <location>
        <position position="78"/>
    </location>
    <ligand>
        <name>5-phospho-alpha-D-ribose 1-diphosphate</name>
        <dbReference type="ChEBI" id="CHEBI:58017"/>
    </ligand>
</feature>
<feature type="binding site" evidence="1">
    <location>
        <position position="103"/>
    </location>
    <ligand>
        <name>5-phospho-alpha-D-ribose 1-diphosphate</name>
        <dbReference type="ChEBI" id="CHEBI:58017"/>
    </ligand>
</feature>
<feature type="binding site" evidence="1">
    <location>
        <begin position="130"/>
        <end position="138"/>
    </location>
    <ligand>
        <name>5-phospho-alpha-D-ribose 1-diphosphate</name>
        <dbReference type="ChEBI" id="CHEBI:58017"/>
    </ligand>
</feature>
<feature type="binding site" evidence="1">
    <location>
        <position position="193"/>
    </location>
    <ligand>
        <name>uracil</name>
        <dbReference type="ChEBI" id="CHEBI:17568"/>
    </ligand>
</feature>
<feature type="binding site" evidence="1">
    <location>
        <begin position="198"/>
        <end position="200"/>
    </location>
    <ligand>
        <name>uracil</name>
        <dbReference type="ChEBI" id="CHEBI:17568"/>
    </ligand>
</feature>
<feature type="binding site" evidence="1">
    <location>
        <position position="199"/>
    </location>
    <ligand>
        <name>5-phospho-alpha-D-ribose 1-diphosphate</name>
        <dbReference type="ChEBI" id="CHEBI:58017"/>
    </ligand>
</feature>
<dbReference type="EC" id="2.4.2.9" evidence="1"/>
<dbReference type="EMBL" id="AE008922">
    <property type="protein sequence ID" value="AAM41664.1"/>
    <property type="molecule type" value="Genomic_DNA"/>
</dbReference>
<dbReference type="EMBL" id="AJ245855">
    <property type="protein sequence ID" value="CAB63116.1"/>
    <property type="molecule type" value="Genomic_DNA"/>
</dbReference>
<dbReference type="RefSeq" id="NP_637740.1">
    <property type="nucleotide sequence ID" value="NC_003902.1"/>
</dbReference>
<dbReference type="RefSeq" id="WP_011037528.1">
    <property type="nucleotide sequence ID" value="NC_003902.1"/>
</dbReference>
<dbReference type="SMR" id="Q9RBJ3"/>
<dbReference type="STRING" id="190485.XCC2386"/>
<dbReference type="EnsemblBacteria" id="AAM41664">
    <property type="protein sequence ID" value="AAM41664"/>
    <property type="gene ID" value="XCC2386"/>
</dbReference>
<dbReference type="KEGG" id="xcc:XCC2386"/>
<dbReference type="PATRIC" id="fig|190485.4.peg.2541"/>
<dbReference type="eggNOG" id="COG0035">
    <property type="taxonomic scope" value="Bacteria"/>
</dbReference>
<dbReference type="HOGENOM" id="CLU_067096_2_2_6"/>
<dbReference type="OrthoDB" id="9781675at2"/>
<dbReference type="UniPathway" id="UPA00574">
    <property type="reaction ID" value="UER00636"/>
</dbReference>
<dbReference type="Proteomes" id="UP000001010">
    <property type="component" value="Chromosome"/>
</dbReference>
<dbReference type="GO" id="GO:0003999">
    <property type="term" value="F:adenine phosphoribosyltransferase activity"/>
    <property type="evidence" value="ECO:0000318"/>
    <property type="project" value="GO_Central"/>
</dbReference>
<dbReference type="GO" id="GO:0005525">
    <property type="term" value="F:GTP binding"/>
    <property type="evidence" value="ECO:0007669"/>
    <property type="project" value="UniProtKB-KW"/>
</dbReference>
<dbReference type="GO" id="GO:0000287">
    <property type="term" value="F:magnesium ion binding"/>
    <property type="evidence" value="ECO:0007669"/>
    <property type="project" value="UniProtKB-UniRule"/>
</dbReference>
<dbReference type="GO" id="GO:0004845">
    <property type="term" value="F:uracil phosphoribosyltransferase activity"/>
    <property type="evidence" value="ECO:0007669"/>
    <property type="project" value="UniProtKB-UniRule"/>
</dbReference>
<dbReference type="GO" id="GO:0044206">
    <property type="term" value="P:UMP salvage"/>
    <property type="evidence" value="ECO:0007669"/>
    <property type="project" value="UniProtKB-UniRule"/>
</dbReference>
<dbReference type="GO" id="GO:0006223">
    <property type="term" value="P:uracil salvage"/>
    <property type="evidence" value="ECO:0007669"/>
    <property type="project" value="InterPro"/>
</dbReference>
<dbReference type="CDD" id="cd06223">
    <property type="entry name" value="PRTases_typeI"/>
    <property type="match status" value="1"/>
</dbReference>
<dbReference type="FunFam" id="3.40.50.2020:FF:000003">
    <property type="entry name" value="Uracil phosphoribosyltransferase"/>
    <property type="match status" value="1"/>
</dbReference>
<dbReference type="Gene3D" id="3.40.50.2020">
    <property type="match status" value="1"/>
</dbReference>
<dbReference type="HAMAP" id="MF_01218_B">
    <property type="entry name" value="Upp_B"/>
    <property type="match status" value="1"/>
</dbReference>
<dbReference type="InterPro" id="IPR000836">
    <property type="entry name" value="PRibTrfase_dom"/>
</dbReference>
<dbReference type="InterPro" id="IPR029057">
    <property type="entry name" value="PRTase-like"/>
</dbReference>
<dbReference type="InterPro" id="IPR034332">
    <property type="entry name" value="Upp_B"/>
</dbReference>
<dbReference type="InterPro" id="IPR050054">
    <property type="entry name" value="UPRTase/APRTase"/>
</dbReference>
<dbReference type="InterPro" id="IPR005765">
    <property type="entry name" value="Ura_phspho_trans"/>
</dbReference>
<dbReference type="NCBIfam" id="NF001097">
    <property type="entry name" value="PRK00129.1"/>
    <property type="match status" value="1"/>
</dbReference>
<dbReference type="NCBIfam" id="TIGR01091">
    <property type="entry name" value="upp"/>
    <property type="match status" value="1"/>
</dbReference>
<dbReference type="PANTHER" id="PTHR32315">
    <property type="entry name" value="ADENINE PHOSPHORIBOSYLTRANSFERASE"/>
    <property type="match status" value="1"/>
</dbReference>
<dbReference type="PANTHER" id="PTHR32315:SF4">
    <property type="entry name" value="URACIL PHOSPHORIBOSYLTRANSFERASE, CHLOROPLASTIC"/>
    <property type="match status" value="1"/>
</dbReference>
<dbReference type="Pfam" id="PF14681">
    <property type="entry name" value="UPRTase"/>
    <property type="match status" value="1"/>
</dbReference>
<dbReference type="SUPFAM" id="SSF53271">
    <property type="entry name" value="PRTase-like"/>
    <property type="match status" value="1"/>
</dbReference>
<accession>Q9RBJ3</accession>
<keyword id="KW-0021">Allosteric enzyme</keyword>
<keyword id="KW-0328">Glycosyltransferase</keyword>
<keyword id="KW-0342">GTP-binding</keyword>
<keyword id="KW-0460">Magnesium</keyword>
<keyword id="KW-0547">Nucleotide-binding</keyword>
<keyword id="KW-1185">Reference proteome</keyword>
<keyword id="KW-0808">Transferase</keyword>
<proteinExistence type="inferred from homology"/>
<reference key="1">
    <citation type="journal article" date="2002" name="Nature">
        <title>Comparison of the genomes of two Xanthomonas pathogens with differing host specificities.</title>
        <authorList>
            <person name="da Silva A.C.R."/>
            <person name="Ferro J.A."/>
            <person name="Reinach F.C."/>
            <person name="Farah C.S."/>
            <person name="Furlan L.R."/>
            <person name="Quaggio R.B."/>
            <person name="Monteiro-Vitorello C.B."/>
            <person name="Van Sluys M.A."/>
            <person name="Almeida N.F. Jr."/>
            <person name="Alves L.M.C."/>
            <person name="do Amaral A.M."/>
            <person name="Bertolini M.C."/>
            <person name="Camargo L.E.A."/>
            <person name="Camarotte G."/>
            <person name="Cannavan F."/>
            <person name="Cardozo J."/>
            <person name="Chambergo F."/>
            <person name="Ciapina L.P."/>
            <person name="Cicarelli R.M.B."/>
            <person name="Coutinho L.L."/>
            <person name="Cursino-Santos J.R."/>
            <person name="El-Dorry H."/>
            <person name="Faria J.B."/>
            <person name="Ferreira A.J.S."/>
            <person name="Ferreira R.C.C."/>
            <person name="Ferro M.I.T."/>
            <person name="Formighieri E.F."/>
            <person name="Franco M.C."/>
            <person name="Greggio C.C."/>
            <person name="Gruber A."/>
            <person name="Katsuyama A.M."/>
            <person name="Kishi L.T."/>
            <person name="Leite R.P."/>
            <person name="Lemos E.G.M."/>
            <person name="Lemos M.V.F."/>
            <person name="Locali E.C."/>
            <person name="Machado M.A."/>
            <person name="Madeira A.M.B.N."/>
            <person name="Martinez-Rossi N.M."/>
            <person name="Martins E.C."/>
            <person name="Meidanis J."/>
            <person name="Menck C.F.M."/>
            <person name="Miyaki C.Y."/>
            <person name="Moon D.H."/>
            <person name="Moreira L.M."/>
            <person name="Novo M.T.M."/>
            <person name="Okura V.K."/>
            <person name="Oliveira M.C."/>
            <person name="Oliveira V.R."/>
            <person name="Pereira H.A."/>
            <person name="Rossi A."/>
            <person name="Sena J.A.D."/>
            <person name="Silva C."/>
            <person name="de Souza R.F."/>
            <person name="Spinola L.A.F."/>
            <person name="Takita M.A."/>
            <person name="Tamura R.E."/>
            <person name="Teixeira E.C."/>
            <person name="Tezza R.I.D."/>
            <person name="Trindade dos Santos M."/>
            <person name="Truffi D."/>
            <person name="Tsai S.M."/>
            <person name="White F.F."/>
            <person name="Setubal J.C."/>
            <person name="Kitajima J.P."/>
        </authorList>
    </citation>
    <scope>NUCLEOTIDE SEQUENCE [LARGE SCALE GENOMIC DNA]</scope>
    <source>
        <strain>ATCC 33913 / DSM 3586 / NCPPB 528 / LMG 568 / P 25</strain>
    </source>
</reference>
<reference key="2">
    <citation type="submission" date="1999-12" db="EMBL/GenBank/DDBJ databases">
        <title>Identification of second endoglucanase gene in Xanthomonas campestris pv campestris.</title>
        <authorList>
            <person name="Schroeter K."/>
            <person name="Puehler A."/>
            <person name="Becker A."/>
        </authorList>
    </citation>
    <scope>NUCLEOTIDE SEQUENCE [GENOMIC DNA] OF 1-207</scope>
    <source>
        <strain>ATCC 13951 / NCIB 11803 / NRRL B-1459</strain>
    </source>
</reference>
<sequence length="210" mass="22633">MKIVEVRHPLVQHKIGLLRDAALSTKGFRELVTELGTLLAYEATANLDTESHVQPGWAGPVEVQRIAGAKITLVPILRAGLGMLPGVLALIPAARVSVVGLQRDEETLQPVPYFERLTGRLEERDALILDPMLATGGTLIATIDMLKRAGARRIKGIFLVAAPEGLKALEAVHPDVEVYTAAIDDHLNEKGYILPGLGDAGDRIFGTRVE</sequence>